<sequence length="246" mass="28360">MEFNKAQNIIGLRVLNDNVIWLWVKDKSVVVIDPSVHEPVIRYIDENNLHLKAILQTHHHSDHIGGTKPLIERWQNVKVIASSKEKKRIPFQNVSVEDGETLNILGEEVKIIEVLGHTSSHIAFFLNGENPVLFIGDTLFSGGCGRIFEGTYQQMYSSLERIKSLPKDTLIYCAHEYTKSNILWALNLKPKDQDLKNKLSEVEKKLSLNKLTIPFLLDEEMKINLFLRAKNLEEFTFLRANKDLWV</sequence>
<dbReference type="EC" id="3.1.2.6" evidence="1"/>
<dbReference type="EMBL" id="CP000576">
    <property type="protein sequence ID" value="ABO17208.1"/>
    <property type="status" value="ALT_INIT"/>
    <property type="molecule type" value="Genomic_DNA"/>
</dbReference>
<dbReference type="RefSeq" id="WP_041484668.1">
    <property type="nucleotide sequence ID" value="NC_009091.1"/>
</dbReference>
<dbReference type="SMR" id="A3PBT3"/>
<dbReference type="STRING" id="167546.P9301_05851"/>
<dbReference type="KEGG" id="pmg:P9301_05851"/>
<dbReference type="eggNOG" id="COG0491">
    <property type="taxonomic scope" value="Bacteria"/>
</dbReference>
<dbReference type="HOGENOM" id="CLU_030571_4_1_3"/>
<dbReference type="OrthoDB" id="9802897at2"/>
<dbReference type="UniPathway" id="UPA00619">
    <property type="reaction ID" value="UER00676"/>
</dbReference>
<dbReference type="Proteomes" id="UP000001430">
    <property type="component" value="Chromosome"/>
</dbReference>
<dbReference type="GO" id="GO:0004416">
    <property type="term" value="F:hydroxyacylglutathione hydrolase activity"/>
    <property type="evidence" value="ECO:0007669"/>
    <property type="project" value="UniProtKB-UniRule"/>
</dbReference>
<dbReference type="GO" id="GO:0046872">
    <property type="term" value="F:metal ion binding"/>
    <property type="evidence" value="ECO:0007669"/>
    <property type="project" value="UniProtKB-KW"/>
</dbReference>
<dbReference type="GO" id="GO:0019243">
    <property type="term" value="P:methylglyoxal catabolic process to D-lactate via S-lactoyl-glutathione"/>
    <property type="evidence" value="ECO:0007669"/>
    <property type="project" value="InterPro"/>
</dbReference>
<dbReference type="CDD" id="cd07723">
    <property type="entry name" value="hydroxyacylglutathione_hydrolase_MBL-fold"/>
    <property type="match status" value="1"/>
</dbReference>
<dbReference type="Gene3D" id="3.60.15.10">
    <property type="entry name" value="Ribonuclease Z/Hydroxyacylglutathione hydrolase-like"/>
    <property type="match status" value="1"/>
</dbReference>
<dbReference type="HAMAP" id="MF_01374">
    <property type="entry name" value="Glyoxalase_2"/>
    <property type="match status" value="1"/>
</dbReference>
<dbReference type="InterPro" id="IPR035680">
    <property type="entry name" value="Clx_II_MBL"/>
</dbReference>
<dbReference type="InterPro" id="IPR050110">
    <property type="entry name" value="Glyoxalase_II_hydrolase"/>
</dbReference>
<dbReference type="InterPro" id="IPR032282">
    <property type="entry name" value="HAGH_C"/>
</dbReference>
<dbReference type="InterPro" id="IPR017782">
    <property type="entry name" value="Hydroxyacylglutathione_Hdrlase"/>
</dbReference>
<dbReference type="InterPro" id="IPR001279">
    <property type="entry name" value="Metallo-B-lactamas"/>
</dbReference>
<dbReference type="InterPro" id="IPR036866">
    <property type="entry name" value="RibonucZ/Hydroxyglut_hydro"/>
</dbReference>
<dbReference type="NCBIfam" id="TIGR03413">
    <property type="entry name" value="GSH_gloB"/>
    <property type="match status" value="1"/>
</dbReference>
<dbReference type="PANTHER" id="PTHR43705">
    <property type="entry name" value="HYDROXYACYLGLUTATHIONE HYDROLASE"/>
    <property type="match status" value="1"/>
</dbReference>
<dbReference type="PANTHER" id="PTHR43705:SF1">
    <property type="entry name" value="HYDROXYACYLGLUTATHIONE HYDROLASE GLOB"/>
    <property type="match status" value="1"/>
</dbReference>
<dbReference type="Pfam" id="PF16123">
    <property type="entry name" value="HAGH_C"/>
    <property type="match status" value="1"/>
</dbReference>
<dbReference type="Pfam" id="PF00753">
    <property type="entry name" value="Lactamase_B"/>
    <property type="match status" value="1"/>
</dbReference>
<dbReference type="PIRSF" id="PIRSF005457">
    <property type="entry name" value="Glx"/>
    <property type="match status" value="1"/>
</dbReference>
<dbReference type="SMART" id="SM00849">
    <property type="entry name" value="Lactamase_B"/>
    <property type="match status" value="1"/>
</dbReference>
<dbReference type="SUPFAM" id="SSF56281">
    <property type="entry name" value="Metallo-hydrolase/oxidoreductase"/>
    <property type="match status" value="1"/>
</dbReference>
<accession>A3PBT3</accession>
<protein>
    <recommendedName>
        <fullName evidence="1">Hydroxyacylglutathione hydrolase</fullName>
        <ecNumber evidence="1">3.1.2.6</ecNumber>
    </recommendedName>
    <alternativeName>
        <fullName evidence="1">Glyoxalase II</fullName>
        <shortName evidence="1">Glx II</shortName>
    </alternativeName>
</protein>
<gene>
    <name evidence="1" type="primary">gloB</name>
    <name type="ordered locus">P9301_05851</name>
</gene>
<evidence type="ECO:0000255" key="1">
    <source>
        <dbReference type="HAMAP-Rule" id="MF_01374"/>
    </source>
</evidence>
<evidence type="ECO:0000305" key="2"/>
<organism>
    <name type="scientific">Prochlorococcus marinus (strain MIT 9301)</name>
    <dbReference type="NCBI Taxonomy" id="167546"/>
    <lineage>
        <taxon>Bacteria</taxon>
        <taxon>Bacillati</taxon>
        <taxon>Cyanobacteriota</taxon>
        <taxon>Cyanophyceae</taxon>
        <taxon>Synechococcales</taxon>
        <taxon>Prochlorococcaceae</taxon>
        <taxon>Prochlorococcus</taxon>
    </lineage>
</organism>
<feature type="chain" id="PRO_0000309677" description="Hydroxyacylglutathione hydrolase">
    <location>
        <begin position="1"/>
        <end position="246"/>
    </location>
</feature>
<feature type="binding site" evidence="1">
    <location>
        <position position="58"/>
    </location>
    <ligand>
        <name>Zn(2+)</name>
        <dbReference type="ChEBI" id="CHEBI:29105"/>
        <label>1</label>
    </ligand>
</feature>
<feature type="binding site" evidence="1">
    <location>
        <position position="60"/>
    </location>
    <ligand>
        <name>Zn(2+)</name>
        <dbReference type="ChEBI" id="CHEBI:29105"/>
        <label>1</label>
    </ligand>
</feature>
<feature type="binding site" evidence="1">
    <location>
        <position position="62"/>
    </location>
    <ligand>
        <name>Zn(2+)</name>
        <dbReference type="ChEBI" id="CHEBI:29105"/>
        <label>2</label>
    </ligand>
</feature>
<feature type="binding site" evidence="1">
    <location>
        <position position="63"/>
    </location>
    <ligand>
        <name>Zn(2+)</name>
        <dbReference type="ChEBI" id="CHEBI:29105"/>
        <label>2</label>
    </ligand>
</feature>
<feature type="binding site" evidence="1">
    <location>
        <position position="117"/>
    </location>
    <ligand>
        <name>Zn(2+)</name>
        <dbReference type="ChEBI" id="CHEBI:29105"/>
        <label>1</label>
    </ligand>
</feature>
<feature type="binding site" evidence="1">
    <location>
        <position position="137"/>
    </location>
    <ligand>
        <name>Zn(2+)</name>
        <dbReference type="ChEBI" id="CHEBI:29105"/>
        <label>1</label>
    </ligand>
</feature>
<feature type="binding site" evidence="1">
    <location>
        <position position="137"/>
    </location>
    <ligand>
        <name>Zn(2+)</name>
        <dbReference type="ChEBI" id="CHEBI:29105"/>
        <label>2</label>
    </ligand>
</feature>
<feature type="binding site" evidence="1">
    <location>
        <position position="175"/>
    </location>
    <ligand>
        <name>Zn(2+)</name>
        <dbReference type="ChEBI" id="CHEBI:29105"/>
        <label>2</label>
    </ligand>
</feature>
<reference key="1">
    <citation type="journal article" date="2007" name="PLoS Genet.">
        <title>Patterns and implications of gene gain and loss in the evolution of Prochlorococcus.</title>
        <authorList>
            <person name="Kettler G.C."/>
            <person name="Martiny A.C."/>
            <person name="Huang K."/>
            <person name="Zucker J."/>
            <person name="Coleman M.L."/>
            <person name="Rodrigue S."/>
            <person name="Chen F."/>
            <person name="Lapidus A."/>
            <person name="Ferriera S."/>
            <person name="Johnson J."/>
            <person name="Steglich C."/>
            <person name="Church G.M."/>
            <person name="Richardson P."/>
            <person name="Chisholm S.W."/>
        </authorList>
    </citation>
    <scope>NUCLEOTIDE SEQUENCE [LARGE SCALE GENOMIC DNA]</scope>
    <source>
        <strain>MIT 9301</strain>
    </source>
</reference>
<comment type="function">
    <text evidence="1">Thiolesterase that catalyzes the hydrolysis of S-D-lactoyl-glutathione to form glutathione and D-lactic acid.</text>
</comment>
<comment type="catalytic activity">
    <reaction evidence="1">
        <text>an S-(2-hydroxyacyl)glutathione + H2O = a 2-hydroxy carboxylate + glutathione + H(+)</text>
        <dbReference type="Rhea" id="RHEA:21864"/>
        <dbReference type="ChEBI" id="CHEBI:15377"/>
        <dbReference type="ChEBI" id="CHEBI:15378"/>
        <dbReference type="ChEBI" id="CHEBI:57925"/>
        <dbReference type="ChEBI" id="CHEBI:58896"/>
        <dbReference type="ChEBI" id="CHEBI:71261"/>
        <dbReference type="EC" id="3.1.2.6"/>
    </reaction>
</comment>
<comment type="cofactor">
    <cofactor evidence="1">
        <name>Zn(2+)</name>
        <dbReference type="ChEBI" id="CHEBI:29105"/>
    </cofactor>
    <text evidence="1">Binds 2 Zn(2+) ions per subunit.</text>
</comment>
<comment type="pathway">
    <text evidence="1">Secondary metabolite metabolism; methylglyoxal degradation; (R)-lactate from methylglyoxal: step 2/2.</text>
</comment>
<comment type="subunit">
    <text evidence="1">Monomer.</text>
</comment>
<comment type="similarity">
    <text evidence="1">Belongs to the metallo-beta-lactamase superfamily. Glyoxalase II family.</text>
</comment>
<comment type="sequence caution" evidence="2">
    <conflict type="erroneous initiation">
        <sequence resource="EMBL-CDS" id="ABO17208"/>
    </conflict>
</comment>
<proteinExistence type="inferred from homology"/>
<name>GLO2_PROM0</name>
<keyword id="KW-0378">Hydrolase</keyword>
<keyword id="KW-0479">Metal-binding</keyword>
<keyword id="KW-1185">Reference proteome</keyword>
<keyword id="KW-0862">Zinc</keyword>